<evidence type="ECO:0000255" key="1">
    <source>
        <dbReference type="PROSITE-ProRule" id="PRU10127"/>
    </source>
</evidence>
<evidence type="ECO:0000269" key="2">
    <source>
    </source>
</evidence>
<evidence type="ECO:0000303" key="3">
    <source>
    </source>
</evidence>
<evidence type="ECO:0000312" key="4">
    <source>
        <dbReference type="EMBL" id="ACM28951.1"/>
    </source>
</evidence>
<keyword id="KW-0119">Carbohydrate metabolism</keyword>
<keyword id="KW-0413">Isomerase</keyword>
<sequence>MTASPRYWIGTSWKMNKTLAEARGFAEALRDADALRDPAIQRFIIPPFTAVREVKSILSDTSVKVGAQNMHWADQGAWTGEVSPLMLRDCNLDIVELGHSERREHFGETNETVGLKTEAAVRHGLIPLICIGETLSDRESGRAAEILSEQVVGALSKLSGSQKQAQILLAYEPVWAIGEKGIPAEPSYADARQAEIIAVAEKVLGRRIPCLYGGSVNPDNCEELISCPHIDGLFIGRSAWNVEGYLDILAKCAAKLRGDTK</sequence>
<feature type="chain" id="PRO_0000446037" description="L-erythrulose-1-phosphate isomerase">
    <location>
        <begin position="1"/>
        <end position="261"/>
    </location>
</feature>
<feature type="active site" description="Electrophile" evidence="1">
    <location>
        <position position="99"/>
    </location>
</feature>
<feature type="active site" description="Proton acceptor" evidence="1">
    <location>
        <position position="172"/>
    </location>
</feature>
<comment type="function">
    <text evidence="2">Involved in catabolism of D-apiose. Catalyzes the isomerization of L-erythrulose 1-phosphate to D-erythrulose 4-phosphate.</text>
</comment>
<comment type="catalytic activity">
    <reaction evidence="2">
        <text>L-erythrulose 1-phosphate = D-erythrulose 4-phosphate</text>
        <dbReference type="Rhea" id="RHEA:49588"/>
        <dbReference type="ChEBI" id="CHEBI:58002"/>
        <dbReference type="ChEBI" id="CHEBI:90796"/>
        <dbReference type="EC" id="5.3.1.33"/>
    </reaction>
</comment>
<comment type="pathway">
    <text evidence="2">Carbohydrate metabolism.</text>
</comment>
<comment type="similarity">
    <text evidence="1">Belongs to the triosephosphate isomerase family.</text>
</comment>
<name>LERI_RHIR8</name>
<reference key="1">
    <citation type="journal article" date="2009" name="J. Bacteriol.">
        <title>Genome sequences of three Agrobacterium biovars help elucidate the evolution of multichromosome genomes in bacteria.</title>
        <authorList>
            <person name="Slater S.C."/>
            <person name="Goldman B.S."/>
            <person name="Goodner B."/>
            <person name="Setubal J.C."/>
            <person name="Farrand S.K."/>
            <person name="Nester E.W."/>
            <person name="Burr T.J."/>
            <person name="Banta L."/>
            <person name="Dickerman A.W."/>
            <person name="Paulsen I."/>
            <person name="Otten L."/>
            <person name="Suen G."/>
            <person name="Welch R."/>
            <person name="Almeida N.F."/>
            <person name="Arnold F."/>
            <person name="Burton O.T."/>
            <person name="Du Z."/>
            <person name="Ewing A."/>
            <person name="Godsy E."/>
            <person name="Heisel S."/>
            <person name="Houmiel K.L."/>
            <person name="Jhaveri J."/>
            <person name="Lu J."/>
            <person name="Miller N.M."/>
            <person name="Norton S."/>
            <person name="Chen Q."/>
            <person name="Phoolcharoen W."/>
            <person name="Ohlin V."/>
            <person name="Ondrusek D."/>
            <person name="Pride N."/>
            <person name="Stricklin S.L."/>
            <person name="Sun J."/>
            <person name="Wheeler C."/>
            <person name="Wilson L."/>
            <person name="Zhu H."/>
            <person name="Wood D.W."/>
        </authorList>
    </citation>
    <scope>NUCLEOTIDE SEQUENCE [LARGE SCALE GENOMIC DNA]</scope>
    <source>
        <strain>K84 / ATCC BAA-868</strain>
    </source>
</reference>
<reference key="2">
    <citation type="journal article" date="2018" name="Nat. Chem. Biol.">
        <title>Functional assignment of multiple catabolic pathways for D-apiose.</title>
        <authorList>
            <person name="Carter M.S."/>
            <person name="Zhang X."/>
            <person name="Huang H."/>
            <person name="Bouvier J.T."/>
            <person name="Francisco B.S."/>
            <person name="Vetting M.W."/>
            <person name="Al-Obaidi N."/>
            <person name="Bonanno J.B."/>
            <person name="Ghosh A."/>
            <person name="Zallot R.G."/>
            <person name="Andersen H.M."/>
            <person name="Almo S.C."/>
            <person name="Gerlt J.A."/>
        </authorList>
    </citation>
    <scope>FUNCTION</scope>
    <scope>CATALYTIC ACTIVITY</scope>
    <scope>PATHWAY</scope>
</reference>
<accession>B9JN20</accession>
<organism>
    <name type="scientific">Rhizobium rhizogenes (strain K84 / ATCC BAA-868)</name>
    <name type="common">Agrobacterium radiobacter</name>
    <dbReference type="NCBI Taxonomy" id="311403"/>
    <lineage>
        <taxon>Bacteria</taxon>
        <taxon>Pseudomonadati</taxon>
        <taxon>Pseudomonadota</taxon>
        <taxon>Alphaproteobacteria</taxon>
        <taxon>Hyphomicrobiales</taxon>
        <taxon>Rhizobiaceae</taxon>
        <taxon>Rhizobium/Agrobacterium group</taxon>
        <taxon>Rhizobium</taxon>
    </lineage>
</organism>
<protein>
    <recommendedName>
        <fullName evidence="3">L-erythrulose-1-phosphate isomerase</fullName>
        <ecNumber evidence="2">5.3.1.33</ecNumber>
    </recommendedName>
</protein>
<proteinExistence type="evidence at protein level"/>
<gene>
    <name evidence="3" type="primary">lerI</name>
    <name evidence="4" type="ordered locus">Arad_7454</name>
</gene>
<dbReference type="EC" id="5.3.1.33" evidence="2"/>
<dbReference type="EMBL" id="CP000629">
    <property type="protein sequence ID" value="ACM28951.1"/>
    <property type="molecule type" value="Genomic_DNA"/>
</dbReference>
<dbReference type="RefSeq" id="WP_007689316.1">
    <property type="nucleotide sequence ID" value="NC_011983.1"/>
</dbReference>
<dbReference type="SMR" id="B9JN20"/>
<dbReference type="STRING" id="311403.Arad_7454"/>
<dbReference type="KEGG" id="ara:Arad_7454"/>
<dbReference type="eggNOG" id="COG0149">
    <property type="taxonomic scope" value="Bacteria"/>
</dbReference>
<dbReference type="HOGENOM" id="CLU_024251_2_3_5"/>
<dbReference type="BioCyc" id="MetaCyc:MONOMER-20967"/>
<dbReference type="Proteomes" id="UP000001600">
    <property type="component" value="Chromosome 2"/>
</dbReference>
<dbReference type="GO" id="GO:0005829">
    <property type="term" value="C:cytosol"/>
    <property type="evidence" value="ECO:0007669"/>
    <property type="project" value="TreeGrafter"/>
</dbReference>
<dbReference type="GO" id="GO:0004807">
    <property type="term" value="F:triose-phosphate isomerase activity"/>
    <property type="evidence" value="ECO:0007669"/>
    <property type="project" value="InterPro"/>
</dbReference>
<dbReference type="GO" id="GO:0006094">
    <property type="term" value="P:gluconeogenesis"/>
    <property type="evidence" value="ECO:0007669"/>
    <property type="project" value="TreeGrafter"/>
</dbReference>
<dbReference type="GO" id="GO:0046166">
    <property type="term" value="P:glyceraldehyde-3-phosphate biosynthetic process"/>
    <property type="evidence" value="ECO:0007669"/>
    <property type="project" value="TreeGrafter"/>
</dbReference>
<dbReference type="GO" id="GO:0019563">
    <property type="term" value="P:glycerol catabolic process"/>
    <property type="evidence" value="ECO:0007669"/>
    <property type="project" value="TreeGrafter"/>
</dbReference>
<dbReference type="GO" id="GO:0006096">
    <property type="term" value="P:glycolytic process"/>
    <property type="evidence" value="ECO:0007669"/>
    <property type="project" value="TreeGrafter"/>
</dbReference>
<dbReference type="CDD" id="cd00311">
    <property type="entry name" value="TIM"/>
    <property type="match status" value="1"/>
</dbReference>
<dbReference type="Gene3D" id="3.20.20.70">
    <property type="entry name" value="Aldolase class I"/>
    <property type="match status" value="1"/>
</dbReference>
<dbReference type="InterPro" id="IPR013785">
    <property type="entry name" value="Aldolase_TIM"/>
</dbReference>
<dbReference type="InterPro" id="IPR035990">
    <property type="entry name" value="TIM_sf"/>
</dbReference>
<dbReference type="InterPro" id="IPR000652">
    <property type="entry name" value="Triosephosphate_isomerase"/>
</dbReference>
<dbReference type="NCBIfam" id="NF000722">
    <property type="entry name" value="PRK00042.2-1"/>
    <property type="match status" value="1"/>
</dbReference>
<dbReference type="PANTHER" id="PTHR21139">
    <property type="entry name" value="TRIOSEPHOSPHATE ISOMERASE"/>
    <property type="match status" value="1"/>
</dbReference>
<dbReference type="PANTHER" id="PTHR21139:SF42">
    <property type="entry name" value="TRIOSEPHOSPHATE ISOMERASE"/>
    <property type="match status" value="1"/>
</dbReference>
<dbReference type="Pfam" id="PF00121">
    <property type="entry name" value="TIM"/>
    <property type="match status" value="1"/>
</dbReference>
<dbReference type="SUPFAM" id="SSF51351">
    <property type="entry name" value="Triosephosphate isomerase (TIM)"/>
    <property type="match status" value="1"/>
</dbReference>
<dbReference type="PROSITE" id="PS00171">
    <property type="entry name" value="TIM_1"/>
    <property type="match status" value="1"/>
</dbReference>
<dbReference type="PROSITE" id="PS51440">
    <property type="entry name" value="TIM_2"/>
    <property type="match status" value="1"/>
</dbReference>